<organism>
    <name type="scientific">Pediococcus pentosaceus (strain ATCC 25745 / CCUG 21536 / LMG 10740 / 183-1w)</name>
    <dbReference type="NCBI Taxonomy" id="278197"/>
    <lineage>
        <taxon>Bacteria</taxon>
        <taxon>Bacillati</taxon>
        <taxon>Bacillota</taxon>
        <taxon>Bacilli</taxon>
        <taxon>Lactobacillales</taxon>
        <taxon>Lactobacillaceae</taxon>
        <taxon>Pediococcus</taxon>
    </lineage>
</organism>
<proteinExistence type="inferred from homology"/>
<evidence type="ECO:0000255" key="1">
    <source>
        <dbReference type="HAMAP-Rule" id="MF_01395"/>
    </source>
</evidence>
<evidence type="ECO:0000255" key="2">
    <source>
        <dbReference type="PROSITE-ProRule" id="PRU01136"/>
    </source>
</evidence>
<feature type="chain" id="PRO_0000389811" description="Acetyl-coenzyme A carboxylase carboxyl transferase subunit beta">
    <location>
        <begin position="1"/>
        <end position="276"/>
    </location>
</feature>
<feature type="domain" description="CoA carboxyltransferase N-terminal" evidence="2">
    <location>
        <begin position="24"/>
        <end position="276"/>
    </location>
</feature>
<feature type="zinc finger region" description="C4-type" evidence="1">
    <location>
        <begin position="28"/>
        <end position="49"/>
    </location>
</feature>
<feature type="binding site" evidence="1">
    <location>
        <position position="28"/>
    </location>
    <ligand>
        <name>Zn(2+)</name>
        <dbReference type="ChEBI" id="CHEBI:29105"/>
    </ligand>
</feature>
<feature type="binding site" evidence="1">
    <location>
        <position position="31"/>
    </location>
    <ligand>
        <name>Zn(2+)</name>
        <dbReference type="ChEBI" id="CHEBI:29105"/>
    </ligand>
</feature>
<feature type="binding site" evidence="1">
    <location>
        <position position="46"/>
    </location>
    <ligand>
        <name>Zn(2+)</name>
        <dbReference type="ChEBI" id="CHEBI:29105"/>
    </ligand>
</feature>
<feature type="binding site" evidence="1">
    <location>
        <position position="49"/>
    </location>
    <ligand>
        <name>Zn(2+)</name>
        <dbReference type="ChEBI" id="CHEBI:29105"/>
    </ligand>
</feature>
<keyword id="KW-0067">ATP-binding</keyword>
<keyword id="KW-0963">Cytoplasm</keyword>
<keyword id="KW-0275">Fatty acid biosynthesis</keyword>
<keyword id="KW-0276">Fatty acid metabolism</keyword>
<keyword id="KW-0444">Lipid biosynthesis</keyword>
<keyword id="KW-0443">Lipid metabolism</keyword>
<keyword id="KW-0479">Metal-binding</keyword>
<keyword id="KW-0547">Nucleotide-binding</keyword>
<keyword id="KW-0808">Transferase</keyword>
<keyword id="KW-0862">Zinc</keyword>
<keyword id="KW-0863">Zinc-finger</keyword>
<dbReference type="EC" id="2.1.3.15" evidence="1"/>
<dbReference type="EMBL" id="CP000422">
    <property type="protein sequence ID" value="ABJ67922.1"/>
    <property type="molecule type" value="Genomic_DNA"/>
</dbReference>
<dbReference type="RefSeq" id="WP_002833591.1">
    <property type="nucleotide sequence ID" value="NC_008525.1"/>
</dbReference>
<dbReference type="SMR" id="Q03FV0"/>
<dbReference type="STRING" id="278197.PEPE_0863"/>
<dbReference type="GeneID" id="33062866"/>
<dbReference type="KEGG" id="ppe:PEPE_0863"/>
<dbReference type="eggNOG" id="COG0777">
    <property type="taxonomic scope" value="Bacteria"/>
</dbReference>
<dbReference type="HOGENOM" id="CLU_015486_1_0_9"/>
<dbReference type="OrthoDB" id="9772975at2"/>
<dbReference type="UniPathway" id="UPA00655">
    <property type="reaction ID" value="UER00711"/>
</dbReference>
<dbReference type="Proteomes" id="UP000000773">
    <property type="component" value="Chromosome"/>
</dbReference>
<dbReference type="GO" id="GO:0009317">
    <property type="term" value="C:acetyl-CoA carboxylase complex"/>
    <property type="evidence" value="ECO:0007669"/>
    <property type="project" value="InterPro"/>
</dbReference>
<dbReference type="GO" id="GO:0003989">
    <property type="term" value="F:acetyl-CoA carboxylase activity"/>
    <property type="evidence" value="ECO:0007669"/>
    <property type="project" value="InterPro"/>
</dbReference>
<dbReference type="GO" id="GO:0005524">
    <property type="term" value="F:ATP binding"/>
    <property type="evidence" value="ECO:0007669"/>
    <property type="project" value="UniProtKB-KW"/>
</dbReference>
<dbReference type="GO" id="GO:0016743">
    <property type="term" value="F:carboxyl- or carbamoyltransferase activity"/>
    <property type="evidence" value="ECO:0007669"/>
    <property type="project" value="UniProtKB-UniRule"/>
</dbReference>
<dbReference type="GO" id="GO:0008270">
    <property type="term" value="F:zinc ion binding"/>
    <property type="evidence" value="ECO:0007669"/>
    <property type="project" value="UniProtKB-UniRule"/>
</dbReference>
<dbReference type="GO" id="GO:0006633">
    <property type="term" value="P:fatty acid biosynthetic process"/>
    <property type="evidence" value="ECO:0007669"/>
    <property type="project" value="UniProtKB-KW"/>
</dbReference>
<dbReference type="GO" id="GO:2001295">
    <property type="term" value="P:malonyl-CoA biosynthetic process"/>
    <property type="evidence" value="ECO:0007669"/>
    <property type="project" value="UniProtKB-UniRule"/>
</dbReference>
<dbReference type="Gene3D" id="3.90.226.10">
    <property type="entry name" value="2-enoyl-CoA Hydratase, Chain A, domain 1"/>
    <property type="match status" value="1"/>
</dbReference>
<dbReference type="HAMAP" id="MF_01395">
    <property type="entry name" value="AcetylCoA_CT_beta"/>
    <property type="match status" value="1"/>
</dbReference>
<dbReference type="InterPro" id="IPR034733">
    <property type="entry name" value="AcCoA_carboxyl_beta"/>
</dbReference>
<dbReference type="InterPro" id="IPR000438">
    <property type="entry name" value="Acetyl_CoA_COase_Trfase_b_su"/>
</dbReference>
<dbReference type="InterPro" id="IPR029045">
    <property type="entry name" value="ClpP/crotonase-like_dom_sf"/>
</dbReference>
<dbReference type="InterPro" id="IPR011762">
    <property type="entry name" value="COA_CT_N"/>
</dbReference>
<dbReference type="PANTHER" id="PTHR42995">
    <property type="entry name" value="ACETYL-COENZYME A CARBOXYLASE CARBOXYL TRANSFERASE SUBUNIT BETA, CHLOROPLASTIC"/>
    <property type="match status" value="1"/>
</dbReference>
<dbReference type="PANTHER" id="PTHR42995:SF5">
    <property type="entry name" value="ACETYL-COENZYME A CARBOXYLASE CARBOXYL TRANSFERASE SUBUNIT BETA, CHLOROPLASTIC"/>
    <property type="match status" value="1"/>
</dbReference>
<dbReference type="Pfam" id="PF01039">
    <property type="entry name" value="Carboxyl_trans"/>
    <property type="match status" value="1"/>
</dbReference>
<dbReference type="PRINTS" id="PR01070">
    <property type="entry name" value="ACCCTRFRASEB"/>
</dbReference>
<dbReference type="SUPFAM" id="SSF52096">
    <property type="entry name" value="ClpP/crotonase"/>
    <property type="match status" value="1"/>
</dbReference>
<dbReference type="PROSITE" id="PS50980">
    <property type="entry name" value="COA_CT_NTER"/>
    <property type="match status" value="1"/>
</dbReference>
<comment type="function">
    <text evidence="1">Component of the acetyl coenzyme A carboxylase (ACC) complex. Biotin carboxylase (BC) catalyzes the carboxylation of biotin on its carrier protein (BCCP) and then the CO(2) group is transferred by the transcarboxylase to acetyl-CoA to form malonyl-CoA.</text>
</comment>
<comment type="catalytic activity">
    <reaction evidence="1">
        <text>N(6)-carboxybiotinyl-L-lysyl-[protein] + acetyl-CoA = N(6)-biotinyl-L-lysyl-[protein] + malonyl-CoA</text>
        <dbReference type="Rhea" id="RHEA:54728"/>
        <dbReference type="Rhea" id="RHEA-COMP:10505"/>
        <dbReference type="Rhea" id="RHEA-COMP:10506"/>
        <dbReference type="ChEBI" id="CHEBI:57288"/>
        <dbReference type="ChEBI" id="CHEBI:57384"/>
        <dbReference type="ChEBI" id="CHEBI:83144"/>
        <dbReference type="ChEBI" id="CHEBI:83145"/>
        <dbReference type="EC" id="2.1.3.15"/>
    </reaction>
</comment>
<comment type="cofactor">
    <cofactor evidence="1">
        <name>Zn(2+)</name>
        <dbReference type="ChEBI" id="CHEBI:29105"/>
    </cofactor>
    <text evidence="1">Binds 1 zinc ion per subunit.</text>
</comment>
<comment type="pathway">
    <text evidence="1">Lipid metabolism; malonyl-CoA biosynthesis; malonyl-CoA from acetyl-CoA: step 1/1.</text>
</comment>
<comment type="subunit">
    <text evidence="1">Acetyl-CoA carboxylase is a heterohexamer composed of biotin carboxyl carrier protein (AccB), biotin carboxylase (AccC) and two subunits each of ACCase subunit alpha (AccA) and ACCase subunit beta (AccD).</text>
</comment>
<comment type="subcellular location">
    <subcellularLocation>
        <location evidence="1">Cytoplasm</location>
    </subcellularLocation>
</comment>
<comment type="similarity">
    <text evidence="1">Belongs to the AccD/PCCB family.</text>
</comment>
<reference key="1">
    <citation type="journal article" date="2006" name="Proc. Natl. Acad. Sci. U.S.A.">
        <title>Comparative genomics of the lactic acid bacteria.</title>
        <authorList>
            <person name="Makarova K.S."/>
            <person name="Slesarev A."/>
            <person name="Wolf Y.I."/>
            <person name="Sorokin A."/>
            <person name="Mirkin B."/>
            <person name="Koonin E.V."/>
            <person name="Pavlov A."/>
            <person name="Pavlova N."/>
            <person name="Karamychev V."/>
            <person name="Polouchine N."/>
            <person name="Shakhova V."/>
            <person name="Grigoriev I."/>
            <person name="Lou Y."/>
            <person name="Rohksar D."/>
            <person name="Lucas S."/>
            <person name="Huang K."/>
            <person name="Goodstein D.M."/>
            <person name="Hawkins T."/>
            <person name="Plengvidhya V."/>
            <person name="Welker D."/>
            <person name="Hughes J."/>
            <person name="Goh Y."/>
            <person name="Benson A."/>
            <person name="Baldwin K."/>
            <person name="Lee J.-H."/>
            <person name="Diaz-Muniz I."/>
            <person name="Dosti B."/>
            <person name="Smeianov V."/>
            <person name="Wechter W."/>
            <person name="Barabote R."/>
            <person name="Lorca G."/>
            <person name="Altermann E."/>
            <person name="Barrangou R."/>
            <person name="Ganesan B."/>
            <person name="Xie Y."/>
            <person name="Rawsthorne H."/>
            <person name="Tamir D."/>
            <person name="Parker C."/>
            <person name="Breidt F."/>
            <person name="Broadbent J.R."/>
            <person name="Hutkins R."/>
            <person name="O'Sullivan D."/>
            <person name="Steele J."/>
            <person name="Unlu G."/>
            <person name="Saier M.H. Jr."/>
            <person name="Klaenhammer T."/>
            <person name="Richardson P."/>
            <person name="Kozyavkin S."/>
            <person name="Weimer B.C."/>
            <person name="Mills D.A."/>
        </authorList>
    </citation>
    <scope>NUCLEOTIDE SEQUENCE [LARGE SCALE GENOMIC DNA]</scope>
    <source>
        <strain>ATCC 25745 / CCUG 21536 / LMG 10740 / 183-1w</strain>
    </source>
</reference>
<protein>
    <recommendedName>
        <fullName evidence="1">Acetyl-coenzyme A carboxylase carboxyl transferase subunit beta</fullName>
        <shortName evidence="1">ACCase subunit beta</shortName>
        <shortName evidence="1">Acetyl-CoA carboxylase carboxyltransferase subunit beta</shortName>
        <ecNumber evidence="1">2.1.3.15</ecNumber>
    </recommendedName>
</protein>
<gene>
    <name evidence="1" type="primary">accD</name>
    <name type="ordered locus">PEPE_0863</name>
</gene>
<accession>Q03FV0</accession>
<name>ACCD_PEDPA</name>
<sequence>MQNKFSLPTQDEIVKRLKKIPEGLWRECSNCHEKFYYRRAGVYEVCPNCGYGARLGSRKRIKLLCDEFEEWDKAMATDPTNIDDEKYKKKLATGIKTTHVNESVLTGKAKIGNNEFAIGVMDSRFIMGSLGQVTGSKIARMFQEATRQHLPVIMFTASGGARMQDGIHSLMQMARVSDEVARHSAEGLLYIAVITDPTTGGVTASYAMQADIIISEPKTLIGFAGRRVIEQTINQKPPKDFQQAETLLKNGFLDDIVERPNLKEYLNNLLNLHSDK</sequence>